<name>EF1A_SOLLC</name>
<feature type="chain" id="PRO_0000090938" description="Elongation factor 1-alpha">
    <location>
        <begin position="1"/>
        <end position="448"/>
    </location>
</feature>
<feature type="domain" description="tr-type G">
    <location>
        <begin position="5"/>
        <end position="230"/>
    </location>
</feature>
<feature type="region of interest" description="G1" evidence="1">
    <location>
        <begin position="14"/>
        <end position="21"/>
    </location>
</feature>
<feature type="region of interest" description="G2" evidence="1">
    <location>
        <begin position="70"/>
        <end position="74"/>
    </location>
</feature>
<feature type="region of interest" description="G3" evidence="1">
    <location>
        <begin position="91"/>
        <end position="94"/>
    </location>
</feature>
<feature type="region of interest" description="G4" evidence="1">
    <location>
        <begin position="153"/>
        <end position="156"/>
    </location>
</feature>
<feature type="region of interest" description="G5" evidence="1">
    <location>
        <begin position="194"/>
        <end position="196"/>
    </location>
</feature>
<feature type="binding site" evidence="1">
    <location>
        <begin position="14"/>
        <end position="21"/>
    </location>
    <ligand>
        <name>GTP</name>
        <dbReference type="ChEBI" id="CHEBI:37565"/>
    </ligand>
</feature>
<feature type="binding site" evidence="1">
    <location>
        <begin position="91"/>
        <end position="95"/>
    </location>
    <ligand>
        <name>GTP</name>
        <dbReference type="ChEBI" id="CHEBI:37565"/>
    </ligand>
</feature>
<feature type="binding site" evidence="1">
    <location>
        <begin position="153"/>
        <end position="156"/>
    </location>
    <ligand>
        <name>GTP</name>
        <dbReference type="ChEBI" id="CHEBI:37565"/>
    </ligand>
</feature>
<feature type="modified residue" description="N6,N6-dimethyllysine" evidence="2">
    <location>
        <position position="55"/>
    </location>
</feature>
<feature type="modified residue" description="N6,N6,N6-trimethyllysine" evidence="2">
    <location>
        <position position="79"/>
    </location>
</feature>
<feature type="modified residue" description="N6,N6,N6-trimethyllysine" evidence="2">
    <location>
        <position position="187"/>
    </location>
</feature>
<feature type="modified residue" description="N6-methyllysine" evidence="2">
    <location>
        <position position="261"/>
    </location>
</feature>
<feature type="modified residue" description="5-glutamyl glycerylphosphorylethanolamine" evidence="1">
    <location>
        <position position="289"/>
    </location>
</feature>
<feature type="modified residue" description="N6,N6,N6-trimethyllysine" evidence="2">
    <location>
        <position position="306"/>
    </location>
</feature>
<feature type="modified residue" description="5-glutamyl glycerylphosphorylethanolamine" evidence="1">
    <location>
        <position position="362"/>
    </location>
</feature>
<feature type="modified residue" description="N6,N6,N6-trimethyllysine" evidence="2">
    <location>
        <position position="396"/>
    </location>
</feature>
<reference key="1">
    <citation type="journal article" date="1990" name="Nucleic Acids Res.">
        <title>Nucleotide sequence of an EF-1 alpha genomic clone from tomato.</title>
        <authorList>
            <person name="Shewmaker C.K."/>
            <person name="Ridge N.P."/>
            <person name="Pokalsky A.R."/>
            <person name="Rose R.E."/>
            <person name="Hiatt W.R."/>
        </authorList>
    </citation>
    <scope>NUCLEOTIDE SEQUENCE [GENOMIC DNA]</scope>
    <source>
        <strain>cv. VFNT Cherry</strain>
    </source>
</reference>
<reference key="2">
    <citation type="journal article" date="1989" name="Nucleic Acids Res.">
        <title>Structure and expression of elongation factor 1 alpha in tomato.</title>
        <authorList>
            <person name="Pokalsky A.R."/>
            <person name="Haitt W.R."/>
            <person name="Ridge N."/>
            <person name="Rasmussen R."/>
            <person name="Houck C.M."/>
            <person name="Shewmaker C.K."/>
        </authorList>
    </citation>
    <scope>NUCLEOTIDE SEQUENCE</scope>
    <source>
        <strain>cv. Caligrande</strain>
    </source>
</reference>
<organism>
    <name type="scientific">Solanum lycopersicum</name>
    <name type="common">Tomato</name>
    <name type="synonym">Lycopersicon esculentum</name>
    <dbReference type="NCBI Taxonomy" id="4081"/>
    <lineage>
        <taxon>Eukaryota</taxon>
        <taxon>Viridiplantae</taxon>
        <taxon>Streptophyta</taxon>
        <taxon>Embryophyta</taxon>
        <taxon>Tracheophyta</taxon>
        <taxon>Spermatophyta</taxon>
        <taxon>Magnoliopsida</taxon>
        <taxon>eudicotyledons</taxon>
        <taxon>Gunneridae</taxon>
        <taxon>Pentapetalae</taxon>
        <taxon>asterids</taxon>
        <taxon>lamiids</taxon>
        <taxon>Solanales</taxon>
        <taxon>Solanaceae</taxon>
        <taxon>Solanoideae</taxon>
        <taxon>Solaneae</taxon>
        <taxon>Solanum</taxon>
        <taxon>Solanum subgen. Lycopersicon</taxon>
    </lineage>
</organism>
<keyword id="KW-0963">Cytoplasm</keyword>
<keyword id="KW-0251">Elongation factor</keyword>
<keyword id="KW-0342">GTP-binding</keyword>
<keyword id="KW-0488">Methylation</keyword>
<keyword id="KW-0547">Nucleotide-binding</keyword>
<keyword id="KW-0597">Phosphoprotein</keyword>
<keyword id="KW-0648">Protein biosynthesis</keyword>
<keyword id="KW-1185">Reference proteome</keyword>
<sequence length="448" mass="49288">MGKEKIHISIVVIGHVDSGKSTTTGHLIYKLGGIDKRVIERFEKEAAEMNKRSFKYAWVLDKLKAERERGITIDIALWKFETTKYYCTVIDAPGHRDFIKNMITGTSQADCAVLIIDSTTGGFEAGISKDGQTREHALLAFTLGVKQMICCCNKMDATTPKYSKARYDEIVKEVSSYLKKVGYNPDKIPFVPISGFEGDNMIERSTNLDWYKGPTLLEALDQINEPKRPSDKPLRLPLQDVYKIGGIGTVPVGRVETGVIKPGMVVTFGPTGLTTEVKSVEMHHEALQEALPGDNVGFNVKNVAVKDLKRGYVASNSKDDPAKGAASFTAQVIIMNHPGQIGNGYAPVLDCHTSHIAVKFAEILTKIDRRSGKELEKEPKFLKNGDAGMVKMIPTKPMVVETFAEYPPLGRFAVRDMRQTVAVGVVKNVDKKDPTGAKVTKAAQKKGK</sequence>
<protein>
    <recommendedName>
        <fullName>Elongation factor 1-alpha</fullName>
        <shortName>EF-1-alpha</shortName>
    </recommendedName>
</protein>
<accession>P17786</accession>
<evidence type="ECO:0000250" key="1"/>
<evidence type="ECO:0000250" key="2">
    <source>
        <dbReference type="UniProtKB" id="Q8GTY0"/>
    </source>
</evidence>
<evidence type="ECO:0000305" key="3"/>
<comment type="function">
    <text>This protein promotes the GTP-dependent binding of aminoacyl-tRNA to the A-site of ribosomes during protein biosynthesis.</text>
</comment>
<comment type="subcellular location">
    <subcellularLocation>
        <location>Cytoplasm</location>
    </subcellularLocation>
</comment>
<comment type="similarity">
    <text evidence="3">Belongs to the TRAFAC class translation factor GTPase superfamily. Classic translation factor GTPase family. EF-Tu/EF-1A subfamily.</text>
</comment>
<dbReference type="EMBL" id="X53043">
    <property type="protein sequence ID" value="CAA37212.1"/>
    <property type="molecule type" value="Genomic_DNA"/>
</dbReference>
<dbReference type="EMBL" id="X14449">
    <property type="protein sequence ID" value="CAA32618.1"/>
    <property type="molecule type" value="mRNA"/>
</dbReference>
<dbReference type="PIR" id="S10507">
    <property type="entry name" value="S10507"/>
</dbReference>
<dbReference type="RefSeq" id="NP_001234035.1">
    <property type="nucleotide sequence ID" value="NM_001247106.2"/>
</dbReference>
<dbReference type="RefSeq" id="XP_004240579.1">
    <property type="nucleotide sequence ID" value="XM_004240531.5"/>
</dbReference>
<dbReference type="SMR" id="P17786"/>
<dbReference type="FunCoup" id="P17786">
    <property type="interactions" value="1995"/>
</dbReference>
<dbReference type="STRING" id="4081.P17786"/>
<dbReference type="PaxDb" id="4081-Solyc06g005060.2.1"/>
<dbReference type="EnsemblPlants" id="Solyc06g005060.3.1">
    <property type="protein sequence ID" value="Solyc06g005060.3.1"/>
    <property type="gene ID" value="Solyc06g005060.3"/>
</dbReference>
<dbReference type="EnsemblPlants" id="Solyc06g009970.3.1">
    <property type="protein sequence ID" value="Solyc06g009970.3.1"/>
    <property type="gene ID" value="Solyc06g009970.3"/>
</dbReference>
<dbReference type="GeneID" id="101244084"/>
<dbReference type="GeneID" id="544055"/>
<dbReference type="Gramene" id="Solyc06g005060.3.1">
    <property type="protein sequence ID" value="Solyc06g005060.3.1"/>
    <property type="gene ID" value="Solyc06g005060.3"/>
</dbReference>
<dbReference type="Gramene" id="Solyc06g009970.3.1">
    <property type="protein sequence ID" value="Solyc06g009970.3.1"/>
    <property type="gene ID" value="Solyc06g009970.3"/>
</dbReference>
<dbReference type="KEGG" id="sly:101244084"/>
<dbReference type="KEGG" id="sly:544055"/>
<dbReference type="eggNOG" id="KOG0052">
    <property type="taxonomic scope" value="Eukaryota"/>
</dbReference>
<dbReference type="HOGENOM" id="CLU_007265_3_5_1"/>
<dbReference type="InParanoid" id="P17786"/>
<dbReference type="OMA" id="FAPQNIT"/>
<dbReference type="OrthoDB" id="5570111at2759"/>
<dbReference type="PhylomeDB" id="P17786"/>
<dbReference type="Proteomes" id="UP000004994">
    <property type="component" value="Chromosome 6"/>
</dbReference>
<dbReference type="ExpressionAtlas" id="P17786">
    <property type="expression patterns" value="baseline and differential"/>
</dbReference>
<dbReference type="GO" id="GO:0005737">
    <property type="term" value="C:cytoplasm"/>
    <property type="evidence" value="ECO:0007669"/>
    <property type="project" value="UniProtKB-SubCell"/>
</dbReference>
<dbReference type="GO" id="GO:0005525">
    <property type="term" value="F:GTP binding"/>
    <property type="evidence" value="ECO:0007669"/>
    <property type="project" value="UniProtKB-KW"/>
</dbReference>
<dbReference type="GO" id="GO:0003924">
    <property type="term" value="F:GTPase activity"/>
    <property type="evidence" value="ECO:0000318"/>
    <property type="project" value="GO_Central"/>
</dbReference>
<dbReference type="GO" id="GO:0003746">
    <property type="term" value="F:translation elongation factor activity"/>
    <property type="evidence" value="ECO:0000318"/>
    <property type="project" value="GO_Central"/>
</dbReference>
<dbReference type="GO" id="GO:0006412">
    <property type="term" value="P:translation"/>
    <property type="evidence" value="ECO:0000318"/>
    <property type="project" value="GO_Central"/>
</dbReference>
<dbReference type="GO" id="GO:0006414">
    <property type="term" value="P:translational elongation"/>
    <property type="evidence" value="ECO:0000318"/>
    <property type="project" value="GO_Central"/>
</dbReference>
<dbReference type="CDD" id="cd01883">
    <property type="entry name" value="EF1_alpha"/>
    <property type="match status" value="1"/>
</dbReference>
<dbReference type="CDD" id="cd03693">
    <property type="entry name" value="EF1_alpha_II"/>
    <property type="match status" value="1"/>
</dbReference>
<dbReference type="CDD" id="cd03705">
    <property type="entry name" value="EF1_alpha_III"/>
    <property type="match status" value="1"/>
</dbReference>
<dbReference type="FunFam" id="2.40.30.10:FF:000003">
    <property type="entry name" value="Elongation factor 1-alpha"/>
    <property type="match status" value="1"/>
</dbReference>
<dbReference type="FunFam" id="2.40.30.10:FF:000005">
    <property type="entry name" value="Elongation factor 1-alpha"/>
    <property type="match status" value="1"/>
</dbReference>
<dbReference type="FunFam" id="3.40.50.300:FF:000255">
    <property type="entry name" value="Elongation factor 1-alpha"/>
    <property type="match status" value="1"/>
</dbReference>
<dbReference type="Gene3D" id="3.40.50.300">
    <property type="entry name" value="P-loop containing nucleotide triphosphate hydrolases"/>
    <property type="match status" value="1"/>
</dbReference>
<dbReference type="Gene3D" id="2.40.30.10">
    <property type="entry name" value="Translation factors"/>
    <property type="match status" value="2"/>
</dbReference>
<dbReference type="HAMAP" id="MF_00118_A">
    <property type="entry name" value="EF_Tu_A"/>
    <property type="match status" value="1"/>
</dbReference>
<dbReference type="InterPro" id="IPR004161">
    <property type="entry name" value="EFTu-like_2"/>
</dbReference>
<dbReference type="InterPro" id="IPR031157">
    <property type="entry name" value="G_TR_CS"/>
</dbReference>
<dbReference type="InterPro" id="IPR054696">
    <property type="entry name" value="GTP-eEF1A_C"/>
</dbReference>
<dbReference type="InterPro" id="IPR027417">
    <property type="entry name" value="P-loop_NTPase"/>
</dbReference>
<dbReference type="InterPro" id="IPR000795">
    <property type="entry name" value="T_Tr_GTP-bd_dom"/>
</dbReference>
<dbReference type="InterPro" id="IPR050100">
    <property type="entry name" value="TRAFAC_GTPase_members"/>
</dbReference>
<dbReference type="InterPro" id="IPR009000">
    <property type="entry name" value="Transl_B-barrel_sf"/>
</dbReference>
<dbReference type="InterPro" id="IPR009001">
    <property type="entry name" value="Transl_elong_EF1A/Init_IF2_C"/>
</dbReference>
<dbReference type="InterPro" id="IPR004539">
    <property type="entry name" value="Transl_elong_EF1A_euk/arc"/>
</dbReference>
<dbReference type="NCBIfam" id="TIGR00483">
    <property type="entry name" value="EF-1_alpha"/>
    <property type="match status" value="1"/>
</dbReference>
<dbReference type="NCBIfam" id="NF008969">
    <property type="entry name" value="PRK12317.1"/>
    <property type="match status" value="1"/>
</dbReference>
<dbReference type="PANTHER" id="PTHR23115">
    <property type="entry name" value="TRANSLATION FACTOR"/>
    <property type="match status" value="1"/>
</dbReference>
<dbReference type="Pfam" id="PF22594">
    <property type="entry name" value="GTP-eEF1A_C"/>
    <property type="match status" value="1"/>
</dbReference>
<dbReference type="Pfam" id="PF00009">
    <property type="entry name" value="GTP_EFTU"/>
    <property type="match status" value="1"/>
</dbReference>
<dbReference type="Pfam" id="PF03144">
    <property type="entry name" value="GTP_EFTU_D2"/>
    <property type="match status" value="1"/>
</dbReference>
<dbReference type="PRINTS" id="PR00315">
    <property type="entry name" value="ELONGATNFCT"/>
</dbReference>
<dbReference type="SUPFAM" id="SSF50465">
    <property type="entry name" value="EF-Tu/eEF-1alpha/eIF2-gamma C-terminal domain"/>
    <property type="match status" value="1"/>
</dbReference>
<dbReference type="SUPFAM" id="SSF52540">
    <property type="entry name" value="P-loop containing nucleoside triphosphate hydrolases"/>
    <property type="match status" value="1"/>
</dbReference>
<dbReference type="SUPFAM" id="SSF50447">
    <property type="entry name" value="Translation proteins"/>
    <property type="match status" value="1"/>
</dbReference>
<dbReference type="PROSITE" id="PS00301">
    <property type="entry name" value="G_TR_1"/>
    <property type="match status" value="1"/>
</dbReference>
<dbReference type="PROSITE" id="PS51722">
    <property type="entry name" value="G_TR_2"/>
    <property type="match status" value="1"/>
</dbReference>
<proteinExistence type="evidence at transcript level"/>